<protein>
    <recommendedName>
        <fullName evidence="2">HTH-type transcriptional regulator BetI</fullName>
    </recommendedName>
</protein>
<feature type="chain" id="PRO_0000070577" description="HTH-type transcriptional regulator BetI">
    <location>
        <begin position="1"/>
        <end position="206"/>
    </location>
</feature>
<feature type="domain" description="HTH tetR-type" evidence="2">
    <location>
        <begin position="8"/>
        <end position="68"/>
    </location>
</feature>
<feature type="DNA-binding region" description="H-T-H motif" evidence="2">
    <location>
        <begin position="31"/>
        <end position="50"/>
    </location>
</feature>
<name>BETI_AGRFC</name>
<proteinExistence type="inferred from homology"/>
<gene>
    <name evidence="2" type="primary">betI</name>
    <name type="ordered locus">Atu0828</name>
    <name type="ORF">AGR_C_1514</name>
</gene>
<accession>Q8UH57</accession>
<sequence>MPKIGMEPLRRKALVDAALRTIGHHGSLNVTMSDIAREAGVSAALAHHYFGSKQQLLLETIRSLLRDLRRDAVAALIRASGPREKLSAIVHVSFQSDQFTPETVAAWLAFYVEAQRSEETRRLLVIYSRRLRSNLMASLNRLCPPDDAARIAEGAAALIDGLYIRHSLRSAPLGLASAPALVEDYFDMQLKSFPDGQRAKPSIRTL</sequence>
<comment type="function">
    <text evidence="1">Repressor involved in the biosynthesis of the osmoprotectant glycine betaine. It represses transcription of the choline transporter BetT and the genes of BetAB involved in the synthesis of glycine betaine (By similarity).</text>
</comment>
<comment type="pathway">
    <text>Amine and polyamine biosynthesis; betaine biosynthesis via choline pathway [regulation].</text>
</comment>
<evidence type="ECO:0000250" key="1"/>
<evidence type="ECO:0000255" key="2">
    <source>
        <dbReference type="HAMAP-Rule" id="MF_00768"/>
    </source>
</evidence>
<keyword id="KW-0238">DNA-binding</keyword>
<keyword id="KW-1185">Reference proteome</keyword>
<keyword id="KW-0678">Repressor</keyword>
<keyword id="KW-0804">Transcription</keyword>
<keyword id="KW-0805">Transcription regulation</keyword>
<reference key="1">
    <citation type="journal article" date="2001" name="Science">
        <title>The genome of the natural genetic engineer Agrobacterium tumefaciens C58.</title>
        <authorList>
            <person name="Wood D.W."/>
            <person name="Setubal J.C."/>
            <person name="Kaul R."/>
            <person name="Monks D.E."/>
            <person name="Kitajima J.P."/>
            <person name="Okura V.K."/>
            <person name="Zhou Y."/>
            <person name="Chen L."/>
            <person name="Wood G.E."/>
            <person name="Almeida N.F. Jr."/>
            <person name="Woo L."/>
            <person name="Chen Y."/>
            <person name="Paulsen I.T."/>
            <person name="Eisen J.A."/>
            <person name="Karp P.D."/>
            <person name="Bovee D. Sr."/>
            <person name="Chapman P."/>
            <person name="Clendenning J."/>
            <person name="Deatherage G."/>
            <person name="Gillet W."/>
            <person name="Grant C."/>
            <person name="Kutyavin T."/>
            <person name="Levy R."/>
            <person name="Li M.-J."/>
            <person name="McClelland E."/>
            <person name="Palmieri A."/>
            <person name="Raymond C."/>
            <person name="Rouse G."/>
            <person name="Saenphimmachak C."/>
            <person name="Wu Z."/>
            <person name="Romero P."/>
            <person name="Gordon D."/>
            <person name="Zhang S."/>
            <person name="Yoo H."/>
            <person name="Tao Y."/>
            <person name="Biddle P."/>
            <person name="Jung M."/>
            <person name="Krespan W."/>
            <person name="Perry M."/>
            <person name="Gordon-Kamm B."/>
            <person name="Liao L."/>
            <person name="Kim S."/>
            <person name="Hendrick C."/>
            <person name="Zhao Z.-Y."/>
            <person name="Dolan M."/>
            <person name="Chumley F."/>
            <person name="Tingey S.V."/>
            <person name="Tomb J.-F."/>
            <person name="Gordon M.P."/>
            <person name="Olson M.V."/>
            <person name="Nester E.W."/>
        </authorList>
    </citation>
    <scope>NUCLEOTIDE SEQUENCE [LARGE SCALE GENOMIC DNA]</scope>
    <source>
        <strain>C58 / ATCC 33970</strain>
    </source>
</reference>
<reference key="2">
    <citation type="journal article" date="2001" name="Science">
        <title>Genome sequence of the plant pathogen and biotechnology agent Agrobacterium tumefaciens C58.</title>
        <authorList>
            <person name="Goodner B."/>
            <person name="Hinkle G."/>
            <person name="Gattung S."/>
            <person name="Miller N."/>
            <person name="Blanchard M."/>
            <person name="Qurollo B."/>
            <person name="Goldman B.S."/>
            <person name="Cao Y."/>
            <person name="Askenazi M."/>
            <person name="Halling C."/>
            <person name="Mullin L."/>
            <person name="Houmiel K."/>
            <person name="Gordon J."/>
            <person name="Vaudin M."/>
            <person name="Iartchouk O."/>
            <person name="Epp A."/>
            <person name="Liu F."/>
            <person name="Wollam C."/>
            <person name="Allinger M."/>
            <person name="Doughty D."/>
            <person name="Scott C."/>
            <person name="Lappas C."/>
            <person name="Markelz B."/>
            <person name="Flanagan C."/>
            <person name="Crowell C."/>
            <person name="Gurson J."/>
            <person name="Lomo C."/>
            <person name="Sear C."/>
            <person name="Strub G."/>
            <person name="Cielo C."/>
            <person name="Slater S."/>
        </authorList>
    </citation>
    <scope>NUCLEOTIDE SEQUENCE [LARGE SCALE GENOMIC DNA]</scope>
    <source>
        <strain>C58 / ATCC 33970</strain>
    </source>
</reference>
<dbReference type="EMBL" id="AE007869">
    <property type="protein sequence ID" value="AAK86634.2"/>
    <property type="molecule type" value="Genomic_DNA"/>
</dbReference>
<dbReference type="PIR" id="A97460">
    <property type="entry name" value="A97460"/>
</dbReference>
<dbReference type="PIR" id="AD2678">
    <property type="entry name" value="AD2678"/>
</dbReference>
<dbReference type="RefSeq" id="NP_353849.2">
    <property type="nucleotide sequence ID" value="NC_003062.2"/>
</dbReference>
<dbReference type="RefSeq" id="WP_010971178.1">
    <property type="nucleotide sequence ID" value="NC_003062.2"/>
</dbReference>
<dbReference type="SMR" id="Q8UH57"/>
<dbReference type="STRING" id="176299.Atu0828"/>
<dbReference type="EnsemblBacteria" id="AAK86634">
    <property type="protein sequence ID" value="AAK86634"/>
    <property type="gene ID" value="Atu0828"/>
</dbReference>
<dbReference type="GeneID" id="1132866"/>
<dbReference type="KEGG" id="atu:Atu0828"/>
<dbReference type="PATRIC" id="fig|176299.10.peg.824"/>
<dbReference type="eggNOG" id="COG1309">
    <property type="taxonomic scope" value="Bacteria"/>
</dbReference>
<dbReference type="HOGENOM" id="CLU_069356_15_4_5"/>
<dbReference type="OrthoDB" id="7618612at2"/>
<dbReference type="PhylomeDB" id="Q8UH57"/>
<dbReference type="BioCyc" id="AGRO:ATU0828-MONOMER"/>
<dbReference type="UniPathway" id="UPA00529"/>
<dbReference type="Proteomes" id="UP000000813">
    <property type="component" value="Chromosome circular"/>
</dbReference>
<dbReference type="GO" id="GO:0003700">
    <property type="term" value="F:DNA-binding transcription factor activity"/>
    <property type="evidence" value="ECO:0007669"/>
    <property type="project" value="UniProtKB-UniRule"/>
</dbReference>
<dbReference type="GO" id="GO:0000976">
    <property type="term" value="F:transcription cis-regulatory region binding"/>
    <property type="evidence" value="ECO:0007669"/>
    <property type="project" value="TreeGrafter"/>
</dbReference>
<dbReference type="GO" id="GO:0019285">
    <property type="term" value="P:glycine betaine biosynthetic process from choline"/>
    <property type="evidence" value="ECO:0007669"/>
    <property type="project" value="UniProtKB-UniRule"/>
</dbReference>
<dbReference type="GO" id="GO:0045892">
    <property type="term" value="P:negative regulation of DNA-templated transcription"/>
    <property type="evidence" value="ECO:0007669"/>
    <property type="project" value="UniProtKB-UniRule"/>
</dbReference>
<dbReference type="Gene3D" id="1.10.357.10">
    <property type="entry name" value="Tetracycline Repressor, domain 2"/>
    <property type="match status" value="1"/>
</dbReference>
<dbReference type="HAMAP" id="MF_00768">
    <property type="entry name" value="HTH_type_BetI"/>
    <property type="match status" value="1"/>
</dbReference>
<dbReference type="InterPro" id="IPR039538">
    <property type="entry name" value="BetI_C"/>
</dbReference>
<dbReference type="InterPro" id="IPR023772">
    <property type="entry name" value="DNA-bd_HTH_TetR-type_CS"/>
</dbReference>
<dbReference type="InterPro" id="IPR009057">
    <property type="entry name" value="Homeodomain-like_sf"/>
</dbReference>
<dbReference type="InterPro" id="IPR050109">
    <property type="entry name" value="HTH-type_TetR-like_transc_reg"/>
</dbReference>
<dbReference type="InterPro" id="IPR001647">
    <property type="entry name" value="HTH_TetR"/>
</dbReference>
<dbReference type="InterPro" id="IPR036271">
    <property type="entry name" value="Tet_transcr_reg_TetR-rel_C_sf"/>
</dbReference>
<dbReference type="InterPro" id="IPR017757">
    <property type="entry name" value="Tscrpt_rep_BetI"/>
</dbReference>
<dbReference type="NCBIfam" id="TIGR03384">
    <property type="entry name" value="betaine_BetI"/>
    <property type="match status" value="1"/>
</dbReference>
<dbReference type="NCBIfam" id="NF001978">
    <property type="entry name" value="PRK00767.1"/>
    <property type="match status" value="1"/>
</dbReference>
<dbReference type="PANTHER" id="PTHR30055">
    <property type="entry name" value="HTH-TYPE TRANSCRIPTIONAL REGULATOR RUTR"/>
    <property type="match status" value="1"/>
</dbReference>
<dbReference type="PANTHER" id="PTHR30055:SF228">
    <property type="entry name" value="TRANSCRIPTIONAL REGULATOR-RELATED"/>
    <property type="match status" value="1"/>
</dbReference>
<dbReference type="Pfam" id="PF13977">
    <property type="entry name" value="TetR_C_6"/>
    <property type="match status" value="1"/>
</dbReference>
<dbReference type="Pfam" id="PF00440">
    <property type="entry name" value="TetR_N"/>
    <property type="match status" value="1"/>
</dbReference>
<dbReference type="PRINTS" id="PR00455">
    <property type="entry name" value="HTHTETR"/>
</dbReference>
<dbReference type="SUPFAM" id="SSF46689">
    <property type="entry name" value="Homeodomain-like"/>
    <property type="match status" value="1"/>
</dbReference>
<dbReference type="SUPFAM" id="SSF48498">
    <property type="entry name" value="Tetracyclin repressor-like, C-terminal domain"/>
    <property type="match status" value="1"/>
</dbReference>
<dbReference type="PROSITE" id="PS01081">
    <property type="entry name" value="HTH_TETR_1"/>
    <property type="match status" value="1"/>
</dbReference>
<dbReference type="PROSITE" id="PS50977">
    <property type="entry name" value="HTH_TETR_2"/>
    <property type="match status" value="1"/>
</dbReference>
<organism>
    <name type="scientific">Agrobacterium fabrum (strain C58 / ATCC 33970)</name>
    <name type="common">Agrobacterium tumefaciens (strain C58)</name>
    <dbReference type="NCBI Taxonomy" id="176299"/>
    <lineage>
        <taxon>Bacteria</taxon>
        <taxon>Pseudomonadati</taxon>
        <taxon>Pseudomonadota</taxon>
        <taxon>Alphaproteobacteria</taxon>
        <taxon>Hyphomicrobiales</taxon>
        <taxon>Rhizobiaceae</taxon>
        <taxon>Rhizobium/Agrobacterium group</taxon>
        <taxon>Agrobacterium</taxon>
        <taxon>Agrobacterium tumefaciens complex</taxon>
    </lineage>
</organism>